<comment type="function">
    <text evidence="2">May act as a specific coactivator for the mammalian TEFs.</text>
</comment>
<comment type="subunit">
    <text evidence="2">Interacts with TEFs.</text>
</comment>
<comment type="interaction">
    <interactant intactId="EBI-11983165">
        <id>Q99990</id>
    </interactant>
    <interactant intactId="EBI-8643161">
        <id>Q9NX04</id>
        <label>AIRIM</label>
    </interactant>
    <organismsDiffer>false</organismsDiffer>
    <experiments>3</experiments>
</comment>
<comment type="interaction">
    <interactant intactId="EBI-11983165">
        <id>Q99990</id>
    </interactant>
    <interactant intactId="EBI-745859">
        <id>P55273</id>
        <label>CDKN2D</label>
    </interactant>
    <organismsDiffer>false</organismsDiffer>
    <experiments>3</experiments>
</comment>
<comment type="interaction">
    <interactant intactId="EBI-11983165">
        <id>Q99990</id>
    </interactant>
    <interactant intactId="EBI-352986">
        <id>P52597</id>
        <label>HNRNPF</label>
    </interactant>
    <organismsDiffer>false</organismsDiffer>
    <experiments>3</experiments>
</comment>
<comment type="interaction">
    <interactant intactId="EBI-11983165">
        <id>Q99990</id>
    </interactant>
    <interactant intactId="EBI-2341787">
        <id>Q17RB8</id>
        <label>LONRF1</label>
    </interactant>
    <organismsDiffer>false</organismsDiffer>
    <experiments>3</experiments>
</comment>
<comment type="interaction">
    <interactant intactId="EBI-11983165">
        <id>Q99990</id>
    </interactant>
    <interactant intactId="EBI-8025850">
        <id>O14770-4</id>
        <label>MEIS2</label>
    </interactant>
    <organismsDiffer>false</organismsDiffer>
    <experiments>3</experiments>
</comment>
<comment type="interaction">
    <interactant intactId="EBI-11983165">
        <id>Q99990</id>
    </interactant>
    <interactant intactId="EBI-357275">
        <id>Q99471</id>
        <label>PFDN5</label>
    </interactant>
    <organismsDiffer>false</organismsDiffer>
    <experiments>3</experiments>
</comment>
<comment type="interaction">
    <interactant intactId="EBI-11983165">
        <id>Q99990</id>
    </interactant>
    <interactant intactId="EBI-10226430">
        <id>Q0D2K3</id>
        <label>RIPPLY1</label>
    </interactant>
    <organismsDiffer>false</organismsDiffer>
    <experiments>3</experiments>
</comment>
<comment type="interaction">
    <interactant intactId="EBI-11983165">
        <id>Q99990</id>
    </interactant>
    <interactant intactId="EBI-9370956">
        <id>Q15562-2</id>
        <label>TEAD2</label>
    </interactant>
    <organismsDiffer>false</organismsDiffer>
    <experiments>3</experiments>
</comment>
<comment type="interaction">
    <interactant intactId="EBI-11983165">
        <id>Q99990</id>
    </interactant>
    <interactant intactId="EBI-746720">
        <id>Q99594</id>
        <label>TEAD3</label>
    </interactant>
    <organismsDiffer>false</organismsDiffer>
    <experiments>4</experiments>
</comment>
<comment type="interaction">
    <interactant intactId="EBI-11983165">
        <id>Q99990</id>
    </interactant>
    <interactant intactId="EBI-747736">
        <id>Q15561</id>
        <label>TEAD4</label>
    </interactant>
    <organismsDiffer>false</organismsDiffer>
    <experiments>3</experiments>
</comment>
<comment type="interaction">
    <interactant intactId="EBI-11983165">
        <id>Q99990</id>
    </interactant>
    <interactant intactId="EBI-750487">
        <id>Q8WW24</id>
        <label>TEKT4</label>
    </interactant>
    <organismsDiffer>false</organismsDiffer>
    <experiments>3</experiments>
</comment>
<comment type="interaction">
    <interactant intactId="EBI-11983165">
        <id>Q99990</id>
    </interactant>
    <interactant intactId="EBI-11741437">
        <id>Q08117-2</id>
        <label>TLE5</label>
    </interactant>
    <organismsDiffer>false</organismsDiffer>
    <experiments>3</experiments>
</comment>
<comment type="interaction">
    <interactant intactId="EBI-11983165">
        <id>Q99990</id>
    </interactant>
    <interactant intactId="EBI-740098">
        <id>P36406</id>
        <label>TRIM23</label>
    </interactant>
    <organismsDiffer>false</organismsDiffer>
    <experiments>3</experiments>
</comment>
<comment type="interaction">
    <interactant intactId="EBI-11983165">
        <id>Q99990</id>
    </interactant>
    <interactant intactId="EBI-3918381">
        <id>Q96PN8</id>
        <label>TSSK3</label>
    </interactant>
    <organismsDiffer>false</organismsDiffer>
    <experiments>3</experiments>
</comment>
<comment type="subcellular location">
    <subcellularLocation>
        <location>Nucleus</location>
    </subcellularLocation>
</comment>
<comment type="similarity">
    <text evidence="3">Belongs to the vestigial family.</text>
</comment>
<sequence length="258" mass="28707">MEEMKKTAIRLPKGKQKPIKTEWNSRCVLFTYFQGDISSVVDEHFSRALSNIKSPQELTPSSQSEGVMLKNDDSMSPNQWRYSSPWTKPQPEVPVTNRAANCNLHVPGPMAVNQFSPSLARRASVRPGELWHFSSLAGTSSLEPGYSHPFPARHLVPEPQPDGKREPLLSLLQQDRCLARPQESAARENGNPGQIAGSTGLLFNLPPGSVHYKKLYVSRGSASTSLPNETLSELETPGKYSLTPPNHWGHPHRYLQHL</sequence>
<name>VGLL1_HUMAN</name>
<reference key="1">
    <citation type="journal article" date="1999" name="Development">
        <title>TONDU (TDU), a novel human protein related to the product of vestigial (vg) gene of Drosophila melanogaster interacts with vertebrate TEF factors and substitutes for Vg function in wing formation.</title>
        <authorList>
            <person name="Vaudin P."/>
            <person name="Delanoue R."/>
            <person name="Davidson I."/>
            <person name="Silber J."/>
            <person name="Zider A."/>
        </authorList>
    </citation>
    <scope>NUCLEOTIDE SEQUENCE [MRNA]</scope>
    <scope>FUNCTION</scope>
    <scope>INTERACTION WITH TEFS</scope>
</reference>
<reference key="2">
    <citation type="journal article" date="2005" name="Nature">
        <title>The DNA sequence of the human X chromosome.</title>
        <authorList>
            <person name="Ross M.T."/>
            <person name="Grafham D.V."/>
            <person name="Coffey A.J."/>
            <person name="Scherer S."/>
            <person name="McLay K."/>
            <person name="Muzny D."/>
            <person name="Platzer M."/>
            <person name="Howell G.R."/>
            <person name="Burrows C."/>
            <person name="Bird C.P."/>
            <person name="Frankish A."/>
            <person name="Lovell F.L."/>
            <person name="Howe K.L."/>
            <person name="Ashurst J.L."/>
            <person name="Fulton R.S."/>
            <person name="Sudbrak R."/>
            <person name="Wen G."/>
            <person name="Jones M.C."/>
            <person name="Hurles M.E."/>
            <person name="Andrews T.D."/>
            <person name="Scott C.E."/>
            <person name="Searle S."/>
            <person name="Ramser J."/>
            <person name="Whittaker A."/>
            <person name="Deadman R."/>
            <person name="Carter N.P."/>
            <person name="Hunt S.E."/>
            <person name="Chen R."/>
            <person name="Cree A."/>
            <person name="Gunaratne P."/>
            <person name="Havlak P."/>
            <person name="Hodgson A."/>
            <person name="Metzker M.L."/>
            <person name="Richards S."/>
            <person name="Scott G."/>
            <person name="Steffen D."/>
            <person name="Sodergren E."/>
            <person name="Wheeler D.A."/>
            <person name="Worley K.C."/>
            <person name="Ainscough R."/>
            <person name="Ambrose K.D."/>
            <person name="Ansari-Lari M.A."/>
            <person name="Aradhya S."/>
            <person name="Ashwell R.I."/>
            <person name="Babbage A.K."/>
            <person name="Bagguley C.L."/>
            <person name="Ballabio A."/>
            <person name="Banerjee R."/>
            <person name="Barker G.E."/>
            <person name="Barlow K.F."/>
            <person name="Barrett I.P."/>
            <person name="Bates K.N."/>
            <person name="Beare D.M."/>
            <person name="Beasley H."/>
            <person name="Beasley O."/>
            <person name="Beck A."/>
            <person name="Bethel G."/>
            <person name="Blechschmidt K."/>
            <person name="Brady N."/>
            <person name="Bray-Allen S."/>
            <person name="Bridgeman A.M."/>
            <person name="Brown A.J."/>
            <person name="Brown M.J."/>
            <person name="Bonnin D."/>
            <person name="Bruford E.A."/>
            <person name="Buhay C."/>
            <person name="Burch P."/>
            <person name="Burford D."/>
            <person name="Burgess J."/>
            <person name="Burrill W."/>
            <person name="Burton J."/>
            <person name="Bye J.M."/>
            <person name="Carder C."/>
            <person name="Carrel L."/>
            <person name="Chako J."/>
            <person name="Chapman J.C."/>
            <person name="Chavez D."/>
            <person name="Chen E."/>
            <person name="Chen G."/>
            <person name="Chen Y."/>
            <person name="Chen Z."/>
            <person name="Chinault C."/>
            <person name="Ciccodicola A."/>
            <person name="Clark S.Y."/>
            <person name="Clarke G."/>
            <person name="Clee C.M."/>
            <person name="Clegg S."/>
            <person name="Clerc-Blankenburg K."/>
            <person name="Clifford K."/>
            <person name="Cobley V."/>
            <person name="Cole C.G."/>
            <person name="Conquer J.S."/>
            <person name="Corby N."/>
            <person name="Connor R.E."/>
            <person name="David R."/>
            <person name="Davies J."/>
            <person name="Davis C."/>
            <person name="Davis J."/>
            <person name="Delgado O."/>
            <person name="Deshazo D."/>
            <person name="Dhami P."/>
            <person name="Ding Y."/>
            <person name="Dinh H."/>
            <person name="Dodsworth S."/>
            <person name="Draper H."/>
            <person name="Dugan-Rocha S."/>
            <person name="Dunham A."/>
            <person name="Dunn M."/>
            <person name="Durbin K.J."/>
            <person name="Dutta I."/>
            <person name="Eades T."/>
            <person name="Ellwood M."/>
            <person name="Emery-Cohen A."/>
            <person name="Errington H."/>
            <person name="Evans K.L."/>
            <person name="Faulkner L."/>
            <person name="Francis F."/>
            <person name="Frankland J."/>
            <person name="Fraser A.E."/>
            <person name="Galgoczy P."/>
            <person name="Gilbert J."/>
            <person name="Gill R."/>
            <person name="Gloeckner G."/>
            <person name="Gregory S.G."/>
            <person name="Gribble S."/>
            <person name="Griffiths C."/>
            <person name="Grocock R."/>
            <person name="Gu Y."/>
            <person name="Gwilliam R."/>
            <person name="Hamilton C."/>
            <person name="Hart E.A."/>
            <person name="Hawes A."/>
            <person name="Heath P.D."/>
            <person name="Heitmann K."/>
            <person name="Hennig S."/>
            <person name="Hernandez J."/>
            <person name="Hinzmann B."/>
            <person name="Ho S."/>
            <person name="Hoffs M."/>
            <person name="Howden P.J."/>
            <person name="Huckle E.J."/>
            <person name="Hume J."/>
            <person name="Hunt P.J."/>
            <person name="Hunt A.R."/>
            <person name="Isherwood J."/>
            <person name="Jacob L."/>
            <person name="Johnson D."/>
            <person name="Jones S."/>
            <person name="de Jong P.J."/>
            <person name="Joseph S.S."/>
            <person name="Keenan S."/>
            <person name="Kelly S."/>
            <person name="Kershaw J.K."/>
            <person name="Khan Z."/>
            <person name="Kioschis P."/>
            <person name="Klages S."/>
            <person name="Knights A.J."/>
            <person name="Kosiura A."/>
            <person name="Kovar-Smith C."/>
            <person name="Laird G.K."/>
            <person name="Langford C."/>
            <person name="Lawlor S."/>
            <person name="Leversha M."/>
            <person name="Lewis L."/>
            <person name="Liu W."/>
            <person name="Lloyd C."/>
            <person name="Lloyd D.M."/>
            <person name="Loulseged H."/>
            <person name="Loveland J.E."/>
            <person name="Lovell J.D."/>
            <person name="Lozado R."/>
            <person name="Lu J."/>
            <person name="Lyne R."/>
            <person name="Ma J."/>
            <person name="Maheshwari M."/>
            <person name="Matthews L.H."/>
            <person name="McDowall J."/>
            <person name="McLaren S."/>
            <person name="McMurray A."/>
            <person name="Meidl P."/>
            <person name="Meitinger T."/>
            <person name="Milne S."/>
            <person name="Miner G."/>
            <person name="Mistry S.L."/>
            <person name="Morgan M."/>
            <person name="Morris S."/>
            <person name="Mueller I."/>
            <person name="Mullikin J.C."/>
            <person name="Nguyen N."/>
            <person name="Nordsiek G."/>
            <person name="Nyakatura G."/>
            <person name="O'dell C.N."/>
            <person name="Okwuonu G."/>
            <person name="Palmer S."/>
            <person name="Pandian R."/>
            <person name="Parker D."/>
            <person name="Parrish J."/>
            <person name="Pasternak S."/>
            <person name="Patel D."/>
            <person name="Pearce A.V."/>
            <person name="Pearson D.M."/>
            <person name="Pelan S.E."/>
            <person name="Perez L."/>
            <person name="Porter K.M."/>
            <person name="Ramsey Y."/>
            <person name="Reichwald K."/>
            <person name="Rhodes S."/>
            <person name="Ridler K.A."/>
            <person name="Schlessinger D."/>
            <person name="Schueler M.G."/>
            <person name="Sehra H.K."/>
            <person name="Shaw-Smith C."/>
            <person name="Shen H."/>
            <person name="Sheridan E.M."/>
            <person name="Shownkeen R."/>
            <person name="Skuce C.D."/>
            <person name="Smith M.L."/>
            <person name="Sotheran E.C."/>
            <person name="Steingruber H.E."/>
            <person name="Steward C.A."/>
            <person name="Storey R."/>
            <person name="Swann R.M."/>
            <person name="Swarbreck D."/>
            <person name="Tabor P.E."/>
            <person name="Taudien S."/>
            <person name="Taylor T."/>
            <person name="Teague B."/>
            <person name="Thomas K."/>
            <person name="Thorpe A."/>
            <person name="Timms K."/>
            <person name="Tracey A."/>
            <person name="Trevanion S."/>
            <person name="Tromans A.C."/>
            <person name="d'Urso M."/>
            <person name="Verduzco D."/>
            <person name="Villasana D."/>
            <person name="Waldron L."/>
            <person name="Wall M."/>
            <person name="Wang Q."/>
            <person name="Warren J."/>
            <person name="Warry G.L."/>
            <person name="Wei X."/>
            <person name="West A."/>
            <person name="Whitehead S.L."/>
            <person name="Whiteley M.N."/>
            <person name="Wilkinson J.E."/>
            <person name="Willey D.L."/>
            <person name="Williams G."/>
            <person name="Williams L."/>
            <person name="Williamson A."/>
            <person name="Williamson H."/>
            <person name="Wilming L."/>
            <person name="Woodmansey R.L."/>
            <person name="Wray P.W."/>
            <person name="Yen J."/>
            <person name="Zhang J."/>
            <person name="Zhou J."/>
            <person name="Zoghbi H."/>
            <person name="Zorilla S."/>
            <person name="Buck D."/>
            <person name="Reinhardt R."/>
            <person name="Poustka A."/>
            <person name="Rosenthal A."/>
            <person name="Lehrach H."/>
            <person name="Meindl A."/>
            <person name="Minx P.J."/>
            <person name="Hillier L.W."/>
            <person name="Willard H.F."/>
            <person name="Wilson R.K."/>
            <person name="Waterston R.H."/>
            <person name="Rice C.M."/>
            <person name="Vaudin M."/>
            <person name="Coulson A."/>
            <person name="Nelson D.L."/>
            <person name="Weinstock G."/>
            <person name="Sulston J.E."/>
            <person name="Durbin R.M."/>
            <person name="Hubbard T."/>
            <person name="Gibbs R.A."/>
            <person name="Beck S."/>
            <person name="Rogers J."/>
            <person name="Bentley D.R."/>
        </authorList>
    </citation>
    <scope>NUCLEOTIDE SEQUENCE [LARGE SCALE GENOMIC DNA]</scope>
</reference>
<reference key="3">
    <citation type="submission" date="2005-09" db="EMBL/GenBank/DDBJ databases">
        <authorList>
            <person name="Mural R.J."/>
            <person name="Istrail S."/>
            <person name="Sutton G.G."/>
            <person name="Florea L."/>
            <person name="Halpern A.L."/>
            <person name="Mobarry C.M."/>
            <person name="Lippert R."/>
            <person name="Walenz B."/>
            <person name="Shatkay H."/>
            <person name="Dew I."/>
            <person name="Miller J.R."/>
            <person name="Flanigan M.J."/>
            <person name="Edwards N.J."/>
            <person name="Bolanos R."/>
            <person name="Fasulo D."/>
            <person name="Halldorsson B.V."/>
            <person name="Hannenhalli S."/>
            <person name="Turner R."/>
            <person name="Yooseph S."/>
            <person name="Lu F."/>
            <person name="Nusskern D.R."/>
            <person name="Shue B.C."/>
            <person name="Zheng X.H."/>
            <person name="Zhong F."/>
            <person name="Delcher A.L."/>
            <person name="Huson D.H."/>
            <person name="Kravitz S.A."/>
            <person name="Mouchard L."/>
            <person name="Reinert K."/>
            <person name="Remington K.A."/>
            <person name="Clark A.G."/>
            <person name="Waterman M.S."/>
            <person name="Eichler E.E."/>
            <person name="Adams M.D."/>
            <person name="Hunkapiller M.W."/>
            <person name="Myers E.W."/>
            <person name="Venter J.C."/>
        </authorList>
    </citation>
    <scope>NUCLEOTIDE SEQUENCE [LARGE SCALE GENOMIC DNA]</scope>
</reference>
<reference key="4">
    <citation type="journal article" date="2004" name="Genome Res.">
        <title>The status, quality, and expansion of the NIH full-length cDNA project: the Mammalian Gene Collection (MGC).</title>
        <authorList>
            <consortium name="The MGC Project Team"/>
        </authorList>
    </citation>
    <scope>NUCLEOTIDE SEQUENCE [LARGE SCALE MRNA]</scope>
    <source>
        <tissue>Placenta</tissue>
    </source>
</reference>
<evidence type="ECO:0000256" key="1">
    <source>
        <dbReference type="SAM" id="MobiDB-lite"/>
    </source>
</evidence>
<evidence type="ECO:0000269" key="2">
    <source>
    </source>
</evidence>
<evidence type="ECO:0000305" key="3"/>
<protein>
    <recommendedName>
        <fullName>Transcription cofactor vestigial-like protein 1</fullName>
        <shortName>Vgl-1</shortName>
    </recommendedName>
    <alternativeName>
        <fullName>Protein TONDU</fullName>
    </alternativeName>
</protein>
<proteinExistence type="evidence at protein level"/>
<organism>
    <name type="scientific">Homo sapiens</name>
    <name type="common">Human</name>
    <dbReference type="NCBI Taxonomy" id="9606"/>
    <lineage>
        <taxon>Eukaryota</taxon>
        <taxon>Metazoa</taxon>
        <taxon>Chordata</taxon>
        <taxon>Craniata</taxon>
        <taxon>Vertebrata</taxon>
        <taxon>Euteleostomi</taxon>
        <taxon>Mammalia</taxon>
        <taxon>Eutheria</taxon>
        <taxon>Euarchontoglires</taxon>
        <taxon>Primates</taxon>
        <taxon>Haplorrhini</taxon>
        <taxon>Catarrhini</taxon>
        <taxon>Hominidae</taxon>
        <taxon>Homo</taxon>
    </lineage>
</organism>
<gene>
    <name type="primary">VGLL1</name>
    <name type="synonym">TDU</name>
</gene>
<dbReference type="EMBL" id="AF137387">
    <property type="protein sequence ID" value="AAF13149.1"/>
    <property type="molecule type" value="mRNA"/>
</dbReference>
<dbReference type="EMBL" id="AC000115">
    <property type="protein sequence ID" value="AAB46354.1"/>
    <property type="molecule type" value="Genomic_DNA"/>
</dbReference>
<dbReference type="EMBL" id="Z97632">
    <property type="status" value="NOT_ANNOTATED_CDS"/>
    <property type="molecule type" value="Genomic_DNA"/>
</dbReference>
<dbReference type="EMBL" id="CH471150">
    <property type="protein sequence ID" value="EAW88467.1"/>
    <property type="molecule type" value="Genomic_DNA"/>
</dbReference>
<dbReference type="EMBL" id="BC000045">
    <property type="protein sequence ID" value="AAH00045.1"/>
    <property type="molecule type" value="mRNA"/>
</dbReference>
<dbReference type="EMBL" id="BC003362">
    <property type="protein sequence ID" value="AAH03362.1"/>
    <property type="molecule type" value="mRNA"/>
</dbReference>
<dbReference type="CCDS" id="CCDS14658.1"/>
<dbReference type="RefSeq" id="NP_057351.1">
    <property type="nucleotide sequence ID" value="NM_016267.4"/>
</dbReference>
<dbReference type="SMR" id="Q99990"/>
<dbReference type="BioGRID" id="119544">
    <property type="interactions" value="16"/>
</dbReference>
<dbReference type="FunCoup" id="Q99990">
    <property type="interactions" value="86"/>
</dbReference>
<dbReference type="IntAct" id="Q99990">
    <property type="interactions" value="14"/>
</dbReference>
<dbReference type="STRING" id="9606.ENSP00000359668"/>
<dbReference type="iPTMnet" id="Q99990"/>
<dbReference type="PhosphoSitePlus" id="Q99990"/>
<dbReference type="BioMuta" id="VGLL1"/>
<dbReference type="DMDM" id="50401655"/>
<dbReference type="jPOST" id="Q99990"/>
<dbReference type="MassIVE" id="Q99990"/>
<dbReference type="PaxDb" id="9606-ENSP00000359668"/>
<dbReference type="PeptideAtlas" id="Q99990"/>
<dbReference type="ProteomicsDB" id="78565"/>
<dbReference type="Antibodypedia" id="16686">
    <property type="antibodies" value="144 antibodies from 24 providers"/>
</dbReference>
<dbReference type="DNASU" id="51442"/>
<dbReference type="Ensembl" id="ENST00000370634.8">
    <property type="protein sequence ID" value="ENSP00000359668.3"/>
    <property type="gene ID" value="ENSG00000102243.13"/>
</dbReference>
<dbReference type="GeneID" id="51442"/>
<dbReference type="KEGG" id="hsa:51442"/>
<dbReference type="MANE-Select" id="ENST00000370634.8">
    <property type="protein sequence ID" value="ENSP00000359668.3"/>
    <property type="RefSeq nucleotide sequence ID" value="NM_016267.4"/>
    <property type="RefSeq protein sequence ID" value="NP_057351.1"/>
</dbReference>
<dbReference type="UCSC" id="uc004ezy.3">
    <property type="organism name" value="human"/>
</dbReference>
<dbReference type="AGR" id="HGNC:20985"/>
<dbReference type="CTD" id="51442"/>
<dbReference type="DisGeNET" id="51442"/>
<dbReference type="GeneCards" id="VGLL1"/>
<dbReference type="HGNC" id="HGNC:20985">
    <property type="gene designation" value="VGLL1"/>
</dbReference>
<dbReference type="HPA" id="ENSG00000102243">
    <property type="expression patterns" value="Tissue enriched (placenta)"/>
</dbReference>
<dbReference type="MIM" id="300583">
    <property type="type" value="gene"/>
</dbReference>
<dbReference type="neXtProt" id="NX_Q99990"/>
<dbReference type="OpenTargets" id="ENSG00000102243"/>
<dbReference type="PharmGKB" id="PA134923162"/>
<dbReference type="VEuPathDB" id="HostDB:ENSG00000102243"/>
<dbReference type="eggNOG" id="ENOG502S2FK">
    <property type="taxonomic scope" value="Eukaryota"/>
</dbReference>
<dbReference type="GeneTree" id="ENSGT00530000063353"/>
<dbReference type="HOGENOM" id="CLU_078814_0_0_1"/>
<dbReference type="InParanoid" id="Q99990"/>
<dbReference type="OMA" id="NDSDMPP"/>
<dbReference type="OrthoDB" id="10069705at2759"/>
<dbReference type="PAN-GO" id="Q99990">
    <property type="GO annotations" value="2 GO annotations based on evolutionary models"/>
</dbReference>
<dbReference type="PhylomeDB" id="Q99990"/>
<dbReference type="TreeFam" id="TF326340"/>
<dbReference type="PathwayCommons" id="Q99990"/>
<dbReference type="SignaLink" id="Q99990"/>
<dbReference type="SIGNOR" id="Q99990"/>
<dbReference type="BioGRID-ORCS" id="51442">
    <property type="hits" value="10 hits in 776 CRISPR screens"/>
</dbReference>
<dbReference type="ChiTaRS" id="VGLL1">
    <property type="organism name" value="human"/>
</dbReference>
<dbReference type="GenomeRNAi" id="51442"/>
<dbReference type="Pharos" id="Q99990">
    <property type="development level" value="Tbio"/>
</dbReference>
<dbReference type="PRO" id="PR:Q99990"/>
<dbReference type="Proteomes" id="UP000005640">
    <property type="component" value="Chromosome X"/>
</dbReference>
<dbReference type="RNAct" id="Q99990">
    <property type="molecule type" value="protein"/>
</dbReference>
<dbReference type="Bgee" id="ENSG00000102243">
    <property type="expression patterns" value="Expressed in placenta and 77 other cell types or tissues"/>
</dbReference>
<dbReference type="ExpressionAtlas" id="Q99990">
    <property type="expression patterns" value="baseline and differential"/>
</dbReference>
<dbReference type="GO" id="GO:0005654">
    <property type="term" value="C:nucleoplasm"/>
    <property type="evidence" value="ECO:0000314"/>
    <property type="project" value="HPA"/>
</dbReference>
<dbReference type="GO" id="GO:0005634">
    <property type="term" value="C:nucleus"/>
    <property type="evidence" value="ECO:0000318"/>
    <property type="project" value="GO_Central"/>
</dbReference>
<dbReference type="GO" id="GO:0003713">
    <property type="term" value="F:transcription coactivator activity"/>
    <property type="evidence" value="ECO:0000304"/>
    <property type="project" value="UniProtKB"/>
</dbReference>
<dbReference type="GO" id="GO:0006355">
    <property type="term" value="P:regulation of DNA-templated transcription"/>
    <property type="evidence" value="ECO:0000303"/>
    <property type="project" value="UniProtKB"/>
</dbReference>
<dbReference type="GO" id="GO:0006357">
    <property type="term" value="P:regulation of transcription by RNA polymerase II"/>
    <property type="evidence" value="ECO:0000318"/>
    <property type="project" value="GO_Central"/>
</dbReference>
<dbReference type="InterPro" id="IPR006627">
    <property type="entry name" value="TDU_repeat"/>
</dbReference>
<dbReference type="InterPro" id="IPR011520">
    <property type="entry name" value="Vg_fam"/>
</dbReference>
<dbReference type="PANTHER" id="PTHR15950">
    <property type="entry name" value="TRANSCRIPTION COFACTOR VESTIGIAL-LIKE PROTEIN"/>
    <property type="match status" value="1"/>
</dbReference>
<dbReference type="PANTHER" id="PTHR15950:SF20">
    <property type="entry name" value="TRANSCRIPTION COFACTOR VESTIGIAL-LIKE PROTEIN 1"/>
    <property type="match status" value="1"/>
</dbReference>
<dbReference type="Pfam" id="PF07545">
    <property type="entry name" value="Vg_Tdu"/>
    <property type="match status" value="1"/>
</dbReference>
<dbReference type="SMART" id="SM00711">
    <property type="entry name" value="TDU"/>
    <property type="match status" value="1"/>
</dbReference>
<feature type="chain" id="PRO_0000191347" description="Transcription cofactor vestigial-like protein 1">
    <location>
        <begin position="1"/>
        <end position="258"/>
    </location>
</feature>
<feature type="region of interest" description="Disordered" evidence="1">
    <location>
        <begin position="55"/>
        <end position="93"/>
    </location>
</feature>
<feature type="compositionally biased region" description="Polar residues" evidence="1">
    <location>
        <begin position="55"/>
        <end position="65"/>
    </location>
</feature>
<feature type="compositionally biased region" description="Polar residues" evidence="1">
    <location>
        <begin position="74"/>
        <end position="87"/>
    </location>
</feature>
<feature type="sequence variant" id="VAR_053735" description="In dbSNP:rs3027860.">
    <original>T</original>
    <variation>I</variation>
    <location>
        <position position="59"/>
    </location>
</feature>
<keyword id="KW-0539">Nucleus</keyword>
<keyword id="KW-1267">Proteomics identification</keyword>
<keyword id="KW-1185">Reference proteome</keyword>
<keyword id="KW-0804">Transcription</keyword>
<keyword id="KW-0805">Transcription regulation</keyword>
<accession>Q99990</accession>
<accession>Q5H915</accession>